<organism>
    <name type="scientific">Pyrococcus horikoshii (strain ATCC 700860 / DSM 12428 / JCM 9974 / NBRC 100139 / OT-3)</name>
    <dbReference type="NCBI Taxonomy" id="70601"/>
    <lineage>
        <taxon>Archaea</taxon>
        <taxon>Methanobacteriati</taxon>
        <taxon>Methanobacteriota</taxon>
        <taxon>Thermococci</taxon>
        <taxon>Thermococcales</taxon>
        <taxon>Thermococcaceae</taxon>
        <taxon>Pyrococcus</taxon>
    </lineage>
</organism>
<sequence>MNVIEVEDVSFRYGNSREYSLRHINLEIRKGEFLGIIGPSGSGKSTFCLTLNGLIPHSIAGEFHGNVIVDGLNTREHSVSELSTKVGLVFQNPDSQLFNMTVLEEVAFALENLGIERDEMWRRIRWALKLVRLWDKREEFPPNLSGGEKQRLAIASVLVMKPKVLVLDEPTSQLDPLGREEVLGLIKLLNKEEKITIILVEHNTDFLLEHADRIVVFDKGRIVLEGKPEDVFENVEFLRTIGVKLPTRVKIGYELKKRGLVERAVLTRDEVVEVLKWAYLRGKS</sequence>
<dbReference type="EC" id="7.-.-.-"/>
<dbReference type="EMBL" id="BA000001">
    <property type="protein sequence ID" value="BAA30934.1"/>
    <property type="molecule type" value="Genomic_DNA"/>
</dbReference>
<dbReference type="PIR" id="G71192">
    <property type="entry name" value="G71192"/>
</dbReference>
<dbReference type="RefSeq" id="WP_010885874.1">
    <property type="nucleotide sequence ID" value="NC_000961.1"/>
</dbReference>
<dbReference type="SMR" id="O59479"/>
<dbReference type="IntAct" id="O59479">
    <property type="interactions" value="1"/>
</dbReference>
<dbReference type="MINT" id="O59479"/>
<dbReference type="STRING" id="70601.gene:9378817"/>
<dbReference type="EnsemblBacteria" id="BAA30934">
    <property type="protein sequence ID" value="BAA30934"/>
    <property type="gene ID" value="BAA30934"/>
</dbReference>
<dbReference type="GeneID" id="1442656"/>
<dbReference type="KEGG" id="pho:PH1815"/>
<dbReference type="eggNOG" id="arCOG00202">
    <property type="taxonomic scope" value="Archaea"/>
</dbReference>
<dbReference type="OrthoDB" id="18209at2157"/>
<dbReference type="Proteomes" id="UP000000752">
    <property type="component" value="Chromosome"/>
</dbReference>
<dbReference type="GO" id="GO:0043190">
    <property type="term" value="C:ATP-binding cassette (ABC) transporter complex"/>
    <property type="evidence" value="ECO:0007669"/>
    <property type="project" value="TreeGrafter"/>
</dbReference>
<dbReference type="GO" id="GO:0005524">
    <property type="term" value="F:ATP binding"/>
    <property type="evidence" value="ECO:0007669"/>
    <property type="project" value="UniProtKB-KW"/>
</dbReference>
<dbReference type="GO" id="GO:0016887">
    <property type="term" value="F:ATP hydrolysis activity"/>
    <property type="evidence" value="ECO:0007669"/>
    <property type="project" value="InterPro"/>
</dbReference>
<dbReference type="GO" id="GO:0042626">
    <property type="term" value="F:ATPase-coupled transmembrane transporter activity"/>
    <property type="evidence" value="ECO:0007669"/>
    <property type="project" value="TreeGrafter"/>
</dbReference>
<dbReference type="CDD" id="cd03225">
    <property type="entry name" value="ABC_cobalt_CbiO_domain1"/>
    <property type="match status" value="1"/>
</dbReference>
<dbReference type="FunFam" id="3.40.50.300:FF:000224">
    <property type="entry name" value="Energy-coupling factor transporter ATP-binding protein EcfA"/>
    <property type="match status" value="1"/>
</dbReference>
<dbReference type="Gene3D" id="3.40.50.300">
    <property type="entry name" value="P-loop containing nucleotide triphosphate hydrolases"/>
    <property type="match status" value="1"/>
</dbReference>
<dbReference type="InterPro" id="IPR003593">
    <property type="entry name" value="AAA+_ATPase"/>
</dbReference>
<dbReference type="InterPro" id="IPR003439">
    <property type="entry name" value="ABC_transporter-like_ATP-bd"/>
</dbReference>
<dbReference type="InterPro" id="IPR017871">
    <property type="entry name" value="ABC_transporter-like_CS"/>
</dbReference>
<dbReference type="InterPro" id="IPR015856">
    <property type="entry name" value="ABC_transpr_CbiO/EcfA_su"/>
</dbReference>
<dbReference type="InterPro" id="IPR050095">
    <property type="entry name" value="ECF_ABC_transporter_ATP-bd"/>
</dbReference>
<dbReference type="InterPro" id="IPR027417">
    <property type="entry name" value="P-loop_NTPase"/>
</dbReference>
<dbReference type="PANTHER" id="PTHR43553:SF24">
    <property type="entry name" value="ENERGY-COUPLING FACTOR TRANSPORTER ATP-BINDING PROTEIN ECFA1"/>
    <property type="match status" value="1"/>
</dbReference>
<dbReference type="PANTHER" id="PTHR43553">
    <property type="entry name" value="HEAVY METAL TRANSPORTER"/>
    <property type="match status" value="1"/>
</dbReference>
<dbReference type="Pfam" id="PF00005">
    <property type="entry name" value="ABC_tran"/>
    <property type="match status" value="1"/>
</dbReference>
<dbReference type="SMART" id="SM00382">
    <property type="entry name" value="AAA"/>
    <property type="match status" value="1"/>
</dbReference>
<dbReference type="SUPFAM" id="SSF52540">
    <property type="entry name" value="P-loop containing nucleoside triphosphate hydrolases"/>
    <property type="match status" value="1"/>
</dbReference>
<dbReference type="PROSITE" id="PS00211">
    <property type="entry name" value="ABC_TRANSPORTER_1"/>
    <property type="match status" value="1"/>
</dbReference>
<dbReference type="PROSITE" id="PS50893">
    <property type="entry name" value="ABC_TRANSPORTER_2"/>
    <property type="match status" value="1"/>
</dbReference>
<keyword id="KW-0067">ATP-binding</keyword>
<keyword id="KW-1003">Cell membrane</keyword>
<keyword id="KW-0472">Membrane</keyword>
<keyword id="KW-0547">Nucleotide-binding</keyword>
<keyword id="KW-1278">Translocase</keyword>
<keyword id="KW-0813">Transport</keyword>
<gene>
    <name type="ordered locus">PH1815</name>
</gene>
<evidence type="ECO:0000250" key="1"/>
<evidence type="ECO:0000255" key="2">
    <source>
        <dbReference type="PROSITE-ProRule" id="PRU00434"/>
    </source>
</evidence>
<evidence type="ECO:0000305" key="3"/>
<name>Y1815_PYRHO</name>
<protein>
    <recommendedName>
        <fullName>Putative ABC transporter ATP-binding protein PH1815</fullName>
        <ecNumber>7.-.-.-</ecNumber>
    </recommendedName>
</protein>
<accession>O59479</accession>
<feature type="chain" id="PRO_0000092160" description="Putative ABC transporter ATP-binding protein PH1815">
    <location>
        <begin position="1"/>
        <end position="284"/>
    </location>
</feature>
<feature type="domain" description="ABC transporter" evidence="2">
    <location>
        <begin position="4"/>
        <end position="244"/>
    </location>
</feature>
<feature type="binding site" evidence="2">
    <location>
        <begin position="38"/>
        <end position="45"/>
    </location>
    <ligand>
        <name>ATP</name>
        <dbReference type="ChEBI" id="CHEBI:30616"/>
    </ligand>
</feature>
<comment type="function">
    <text evidence="1">Probably part of an ABC transporter complex. Responsible for energy coupling to the transport system (By similarity).</text>
</comment>
<comment type="subcellular location">
    <subcellularLocation>
        <location evidence="1">Cell membrane</location>
        <topology evidence="1">Peripheral membrane protein</topology>
    </subcellularLocation>
</comment>
<comment type="similarity">
    <text evidence="3">Belongs to the ABC transporter superfamily.</text>
</comment>
<proteinExistence type="inferred from homology"/>
<reference key="1">
    <citation type="journal article" date="1998" name="DNA Res.">
        <title>Complete sequence and gene organization of the genome of a hyper-thermophilic archaebacterium, Pyrococcus horikoshii OT3.</title>
        <authorList>
            <person name="Kawarabayasi Y."/>
            <person name="Sawada M."/>
            <person name="Horikawa H."/>
            <person name="Haikawa Y."/>
            <person name="Hino Y."/>
            <person name="Yamamoto S."/>
            <person name="Sekine M."/>
            <person name="Baba S."/>
            <person name="Kosugi H."/>
            <person name="Hosoyama A."/>
            <person name="Nagai Y."/>
            <person name="Sakai M."/>
            <person name="Ogura K."/>
            <person name="Otsuka R."/>
            <person name="Nakazawa H."/>
            <person name="Takamiya M."/>
            <person name="Ohfuku Y."/>
            <person name="Funahashi T."/>
            <person name="Tanaka T."/>
            <person name="Kudoh Y."/>
            <person name="Yamazaki J."/>
            <person name="Kushida N."/>
            <person name="Oguchi A."/>
            <person name="Aoki K."/>
            <person name="Yoshizawa T."/>
            <person name="Nakamura Y."/>
            <person name="Robb F.T."/>
            <person name="Horikoshi K."/>
            <person name="Masuchi Y."/>
            <person name="Shizuya H."/>
            <person name="Kikuchi H."/>
        </authorList>
    </citation>
    <scope>NUCLEOTIDE SEQUENCE [LARGE SCALE GENOMIC DNA]</scope>
    <source>
        <strain>ATCC 700860 / DSM 12428 / JCM 9974 / NBRC 100139 / OT-3</strain>
    </source>
</reference>